<keyword id="KW-0027">Amidation</keyword>
<keyword id="KW-0165">Cleavage on pair of basic residues</keyword>
<keyword id="KW-0903">Direct protein sequencing</keyword>
<keyword id="KW-1015">Disulfide bond</keyword>
<keyword id="KW-0872">Ion channel impairing toxin</keyword>
<keyword id="KW-0166">Nematocyst</keyword>
<keyword id="KW-0528">Neurotoxin</keyword>
<keyword id="KW-0964">Secreted</keyword>
<keyword id="KW-0732">Signal</keyword>
<keyword id="KW-0800">Toxin</keyword>
<keyword id="KW-0738">Voltage-gated sodium channel impairing toxin</keyword>
<name>NA24_STIHA</name>
<proteinExistence type="evidence at protein level"/>
<accession>B1B5I9</accession>
<evidence type="ECO:0000250" key="1"/>
<evidence type="ECO:0000250" key="2">
    <source>
        <dbReference type="UniProtKB" id="P19651"/>
    </source>
</evidence>
<evidence type="ECO:0000255" key="3"/>
<evidence type="ECO:0000269" key="4">
    <source>
    </source>
</evidence>
<evidence type="ECO:0000303" key="5">
    <source>
    </source>
</evidence>
<evidence type="ECO:0000303" key="6">
    <source>
    </source>
</evidence>
<evidence type="ECO:0000305" key="7"/>
<evidence type="ECO:0000305" key="8">
    <source>
    </source>
</evidence>
<organism>
    <name type="scientific">Stichodactyla haddoni</name>
    <name type="common">Saddle carpet anemone</name>
    <name type="synonym">Haddon's sea anemone</name>
    <dbReference type="NCBI Taxonomy" id="475174"/>
    <lineage>
        <taxon>Eukaryota</taxon>
        <taxon>Metazoa</taxon>
        <taxon>Cnidaria</taxon>
        <taxon>Anthozoa</taxon>
        <taxon>Hexacorallia</taxon>
        <taxon>Actiniaria</taxon>
        <taxon>Stichodactylidae</taxon>
        <taxon>Stichodactyla</taxon>
    </lineage>
</organism>
<dbReference type="EMBL" id="AB362570">
    <property type="protein sequence ID" value="BAG12825.1"/>
    <property type="molecule type" value="mRNA"/>
</dbReference>
<dbReference type="SMR" id="B1B5I9"/>
<dbReference type="TCDB" id="8.B.17.1.8">
    <property type="family name" value="the sea anemone peptide toxin class iii (shi) family"/>
</dbReference>
<dbReference type="GO" id="GO:0005576">
    <property type="term" value="C:extracellular region"/>
    <property type="evidence" value="ECO:0007669"/>
    <property type="project" value="UniProtKB-SubCell"/>
</dbReference>
<dbReference type="GO" id="GO:0042151">
    <property type="term" value="C:nematocyst"/>
    <property type="evidence" value="ECO:0007669"/>
    <property type="project" value="UniProtKB-SubCell"/>
</dbReference>
<dbReference type="GO" id="GO:0017080">
    <property type="term" value="F:sodium channel regulator activity"/>
    <property type="evidence" value="ECO:0007669"/>
    <property type="project" value="UniProtKB-KW"/>
</dbReference>
<dbReference type="GO" id="GO:0090729">
    <property type="term" value="F:toxin activity"/>
    <property type="evidence" value="ECO:0007669"/>
    <property type="project" value="UniProtKB-KW"/>
</dbReference>
<dbReference type="Gene3D" id="2.20.20.10">
    <property type="entry name" value="Anthopleurin-A"/>
    <property type="match status" value="1"/>
</dbReference>
<dbReference type="InterPro" id="IPR023355">
    <property type="entry name" value="Myo_ane_neurotoxin_sf"/>
</dbReference>
<dbReference type="Pfam" id="PF00706">
    <property type="entry name" value="Toxin_4"/>
    <property type="match status" value="1"/>
</dbReference>
<dbReference type="SUPFAM" id="SSF57392">
    <property type="entry name" value="Defensin-like"/>
    <property type="match status" value="1"/>
</dbReference>
<reference key="1">
    <citation type="journal article" date="2008" name="Peptides">
        <title>Novel peptide toxins from the sea anemone Stichodactyla haddoni.</title>
        <authorList>
            <person name="Honma T."/>
            <person name="Kawahata S."/>
            <person name="Ishida M."/>
            <person name="Nagai H."/>
            <person name="Nagashima Y."/>
            <person name="Shiomi K."/>
        </authorList>
    </citation>
    <scope>NUCLEOTIDE SEQUENCE [MRNA]</scope>
    <scope>PROTEIN SEQUENCE OF 36-79</scope>
    <scope>AMIDATION AT LYS-83</scope>
    <scope>MASS SPECTROMETRY</scope>
    <scope>TOXIC DOSE</scope>
</reference>
<reference key="2">
    <citation type="journal article" date="2012" name="Toxicon">
        <title>Development of a rational nomenclature for naming peptide and protein toxins from sea anemones.</title>
        <authorList>
            <person name="Oliveira J.S."/>
            <person name="Fuentes-Silva D."/>
            <person name="King G.F."/>
        </authorList>
    </citation>
    <scope>NOMENCLATURE</scope>
</reference>
<protein>
    <recommendedName>
        <fullName evidence="6">Delta-stichotoxin-Shd3a</fullName>
        <shortName evidence="6">Delta-SHTX-Shd3a</shortName>
    </recommendedName>
    <alternativeName>
        <fullName evidence="5">Sodium channel toxin SHTX IV</fullName>
    </alternativeName>
    <alternativeName>
        <fullName>Sodium channel toxin SHTX-4</fullName>
    </alternativeName>
</protein>
<feature type="signal peptide" evidence="3">
    <location>
        <begin position="1"/>
        <end position="19"/>
    </location>
</feature>
<feature type="propeptide" id="PRO_0000344517" evidence="4">
    <location>
        <begin position="20"/>
        <end position="33"/>
    </location>
</feature>
<feature type="chain" id="PRO_0000344518" description="Delta-stichotoxin-Shd3a">
    <location>
        <begin position="36"/>
        <end position="83"/>
    </location>
</feature>
<feature type="modified residue" description="Lysine amide" evidence="8">
    <location>
        <position position="83"/>
    </location>
</feature>
<feature type="disulfide bond" evidence="2">
    <location>
        <begin position="38"/>
        <end position="78"/>
    </location>
</feature>
<feature type="disulfide bond" evidence="2">
    <location>
        <begin position="40"/>
        <end position="68"/>
    </location>
</feature>
<feature type="disulfide bond" evidence="2">
    <location>
        <begin position="61"/>
        <end position="79"/>
    </location>
</feature>
<comment type="function">
    <text evidence="1">Binds specifically to voltage-gated sodium channels (Nav), thereby delaying their inactivation during signal transduction.</text>
</comment>
<comment type="subcellular location">
    <subcellularLocation>
        <location>Secreted</location>
    </subcellularLocation>
    <subcellularLocation>
        <location>Nematocyst</location>
    </subcellularLocation>
</comment>
<comment type="mass spectrometry"/>
<comment type="toxic dose">
    <text evidence="4">LD(50) is 93 ug/kg into crabs.</text>
</comment>
<comment type="similarity">
    <text evidence="7">Belongs to the sea anemone sodium channel inhibitory toxin family. Type II subfamily.</text>
</comment>
<sequence>MAYLKIVLVALMLVLGVSAMRLSDQEDQDVSVVKRAACKCDDDGPDIRSATLTGTVDFWNCNEGWEKCTAVYTAVASCCRKKKG</sequence>